<dbReference type="EMBL" id="AY335486">
    <property type="protein sequence ID" value="AAP97430.1"/>
    <property type="molecule type" value="mRNA"/>
</dbReference>
<dbReference type="EMBL" id="AC079022">
    <property type="protein sequence ID" value="AAK73130.1"/>
    <property type="molecule type" value="Genomic_DNA"/>
</dbReference>
<dbReference type="EMBL" id="AC129716">
    <property type="protein sequence ID" value="AAU44132.1"/>
    <property type="status" value="ALT_SEQ"/>
    <property type="molecule type" value="Genomic_DNA"/>
</dbReference>
<dbReference type="EMBL" id="AP008211">
    <property type="protein sequence ID" value="BAF16341.1"/>
    <property type="molecule type" value="Genomic_DNA"/>
</dbReference>
<dbReference type="EMBL" id="AP014961">
    <property type="status" value="NOT_ANNOTATED_CDS"/>
    <property type="molecule type" value="Genomic_DNA"/>
</dbReference>
<dbReference type="EMBL" id="CM000142">
    <property type="protein sequence ID" value="EAZ32598.1"/>
    <property type="molecule type" value="Genomic_DNA"/>
</dbReference>
<dbReference type="RefSeq" id="XP_015639772.1">
    <property type="nucleotide sequence ID" value="XM_015784286.1"/>
</dbReference>
<dbReference type="FunCoup" id="Q7XBA5">
    <property type="interactions" value="7"/>
</dbReference>
<dbReference type="PaxDb" id="39947-Q7XBA5"/>
<dbReference type="KEGG" id="dosa:Os05g0107900"/>
<dbReference type="eggNOG" id="ENOG502RY2K">
    <property type="taxonomic scope" value="Eukaryota"/>
</dbReference>
<dbReference type="HOGENOM" id="CLU_072240_1_0_1"/>
<dbReference type="InParanoid" id="Q7XBA5"/>
<dbReference type="OrthoDB" id="9049620at2759"/>
<dbReference type="Proteomes" id="UP000000763">
    <property type="component" value="Chromosome 5"/>
</dbReference>
<dbReference type="Proteomes" id="UP000007752">
    <property type="component" value="Chromosome 5"/>
</dbReference>
<dbReference type="Proteomes" id="UP000059680">
    <property type="component" value="Chromosome 5"/>
</dbReference>
<dbReference type="InterPro" id="IPR033347">
    <property type="entry name" value="DI19"/>
</dbReference>
<dbReference type="InterPro" id="IPR027935">
    <property type="entry name" value="Di19_C"/>
</dbReference>
<dbReference type="InterPro" id="IPR008598">
    <property type="entry name" value="Di19_Zn-bd"/>
</dbReference>
<dbReference type="PANTHER" id="PTHR31875">
    <property type="entry name" value="PROTEIN DEHYDRATION-INDUCED 19"/>
    <property type="match status" value="1"/>
</dbReference>
<dbReference type="PANTHER" id="PTHR31875:SF9">
    <property type="entry name" value="PROTEIN DEHYDRATION-INDUCED 19 HOMOLOG 6"/>
    <property type="match status" value="1"/>
</dbReference>
<dbReference type="Pfam" id="PF14571">
    <property type="entry name" value="Di19_C"/>
    <property type="match status" value="1"/>
</dbReference>
<dbReference type="Pfam" id="PF05605">
    <property type="entry name" value="zf-Di19"/>
    <property type="match status" value="1"/>
</dbReference>
<feature type="chain" id="PRO_0000304425" description="Protein DEHYDRATION-INDUCED 19 homolog 6">
    <location>
        <begin position="1"/>
        <end position="208"/>
    </location>
</feature>
<feature type="region of interest" description="Disordered" evidence="1">
    <location>
        <begin position="151"/>
        <end position="190"/>
    </location>
</feature>
<feature type="compositionally biased region" description="Basic and acidic residues" evidence="1">
    <location>
        <begin position="153"/>
        <end position="163"/>
    </location>
</feature>
<feature type="compositionally biased region" description="Basic and acidic residues" evidence="1">
    <location>
        <begin position="170"/>
        <end position="190"/>
    </location>
</feature>
<sequence>MASYHQQQGGSTFMAIPTINFQMYSEIAGDDEWWEYIPCPFCYIEVEVHFLCDHLQEEHCFDMKNAVCPICADNLDKDTDEHFRVQHSHLLKRRKSSSFSCKPSSAAADKGSYEEDSYFEAPSHCMGRPAPDSSPDPLLSQFICCSLAPPVDSPRRSEADAEGHGSSSSDDQKRREQGVMDDASKEELEERLQRIEFVKQMLMTTIAY</sequence>
<comment type="similarity">
    <text evidence="2">Belongs to the Di19 family.</text>
</comment>
<comment type="sequence caution" evidence="2">
    <conflict type="erroneous gene model prediction">
        <sequence resource="EMBL-CDS" id="AAU44132"/>
    </conflict>
</comment>
<accession>Q7XBA5</accession>
<accession>Q65X26</accession>
<accession>Q94HL4</accession>
<organism>
    <name type="scientific">Oryza sativa subsp. japonica</name>
    <name type="common">Rice</name>
    <dbReference type="NCBI Taxonomy" id="39947"/>
    <lineage>
        <taxon>Eukaryota</taxon>
        <taxon>Viridiplantae</taxon>
        <taxon>Streptophyta</taxon>
        <taxon>Embryophyta</taxon>
        <taxon>Tracheophyta</taxon>
        <taxon>Spermatophyta</taxon>
        <taxon>Magnoliopsida</taxon>
        <taxon>Liliopsida</taxon>
        <taxon>Poales</taxon>
        <taxon>Poaceae</taxon>
        <taxon>BOP clade</taxon>
        <taxon>Oryzoideae</taxon>
        <taxon>Oryzeae</taxon>
        <taxon>Oryzinae</taxon>
        <taxon>Oryza</taxon>
        <taxon>Oryza sativa</taxon>
    </lineage>
</organism>
<protein>
    <recommendedName>
        <fullName>Protein DEHYDRATION-INDUCED 19 homolog 6</fullName>
    </recommendedName>
    <alternativeName>
        <fullName>OsDi19-6</fullName>
    </alternativeName>
</protein>
<keyword id="KW-1185">Reference proteome</keyword>
<proteinExistence type="evidence at transcript level"/>
<gene>
    <name type="primary">DI19-6</name>
    <name type="synonym">DI1</name>
    <name type="ordered locus">Os05g0107900</name>
    <name type="ordered locus">LOC_Os05g01730</name>
    <name type="ORF">OsJ_016081</name>
    <name type="ORF">OSJNBa0068N01.9</name>
</gene>
<evidence type="ECO:0000256" key="1">
    <source>
        <dbReference type="SAM" id="MobiDB-lite"/>
    </source>
</evidence>
<evidence type="ECO:0000305" key="2"/>
<reference key="1">
    <citation type="submission" date="2003-07" db="EMBL/GenBank/DDBJ databases">
        <title>Abscisic acid-dependent and -independent regulation of gene expression by progressive drought in Oryza sativa.</title>
        <authorList>
            <person name="Yao Q."/>
            <person name="Peng R."/>
            <person name="Xiong A."/>
        </authorList>
    </citation>
    <scope>NUCLEOTIDE SEQUENCE [MRNA]</scope>
</reference>
<reference key="2">
    <citation type="journal article" date="2005" name="Mol. Genet. Genomics">
        <title>A fine physical map of the rice chromosome 5.</title>
        <authorList>
            <person name="Cheng C.-H."/>
            <person name="Chung M.C."/>
            <person name="Liu S.-M."/>
            <person name="Chen S.-K."/>
            <person name="Kao F.Y."/>
            <person name="Lin S.-J."/>
            <person name="Hsiao S.-H."/>
            <person name="Tseng I.C."/>
            <person name="Hsing Y.-I.C."/>
            <person name="Wu H.-P."/>
            <person name="Chen C.-S."/>
            <person name="Shaw J.-F."/>
            <person name="Wu J."/>
            <person name="Matsumoto T."/>
            <person name="Sasaki T."/>
            <person name="Chen H.-C."/>
            <person name="Chow T.-Y."/>
        </authorList>
    </citation>
    <scope>NUCLEOTIDE SEQUENCE [LARGE SCALE GENOMIC DNA]</scope>
    <source>
        <strain>cv. Nipponbare</strain>
    </source>
</reference>
<reference key="3">
    <citation type="journal article" date="2005" name="Nature">
        <title>The map-based sequence of the rice genome.</title>
        <authorList>
            <consortium name="International rice genome sequencing project (IRGSP)"/>
        </authorList>
    </citation>
    <scope>NUCLEOTIDE SEQUENCE [LARGE SCALE GENOMIC DNA]</scope>
    <source>
        <strain>cv. Nipponbare</strain>
    </source>
</reference>
<reference key="4">
    <citation type="journal article" date="2008" name="Nucleic Acids Res.">
        <title>The rice annotation project database (RAP-DB): 2008 update.</title>
        <authorList>
            <consortium name="The rice annotation project (RAP)"/>
        </authorList>
    </citation>
    <scope>GENOME REANNOTATION</scope>
    <source>
        <strain>cv. Nipponbare</strain>
    </source>
</reference>
<reference key="5">
    <citation type="journal article" date="2013" name="Rice">
        <title>Improvement of the Oryza sativa Nipponbare reference genome using next generation sequence and optical map data.</title>
        <authorList>
            <person name="Kawahara Y."/>
            <person name="de la Bastide M."/>
            <person name="Hamilton J.P."/>
            <person name="Kanamori H."/>
            <person name="McCombie W.R."/>
            <person name="Ouyang S."/>
            <person name="Schwartz D.C."/>
            <person name="Tanaka T."/>
            <person name="Wu J."/>
            <person name="Zhou S."/>
            <person name="Childs K.L."/>
            <person name="Davidson R.M."/>
            <person name="Lin H."/>
            <person name="Quesada-Ocampo L."/>
            <person name="Vaillancourt B."/>
            <person name="Sakai H."/>
            <person name="Lee S.S."/>
            <person name="Kim J."/>
            <person name="Numa H."/>
            <person name="Itoh T."/>
            <person name="Buell C.R."/>
            <person name="Matsumoto T."/>
        </authorList>
    </citation>
    <scope>GENOME REANNOTATION</scope>
    <source>
        <strain>cv. Nipponbare</strain>
    </source>
</reference>
<reference key="6">
    <citation type="journal article" date="2005" name="PLoS Biol.">
        <title>The genomes of Oryza sativa: a history of duplications.</title>
        <authorList>
            <person name="Yu J."/>
            <person name="Wang J."/>
            <person name="Lin W."/>
            <person name="Li S."/>
            <person name="Li H."/>
            <person name="Zhou J."/>
            <person name="Ni P."/>
            <person name="Dong W."/>
            <person name="Hu S."/>
            <person name="Zeng C."/>
            <person name="Zhang J."/>
            <person name="Zhang Y."/>
            <person name="Li R."/>
            <person name="Xu Z."/>
            <person name="Li S."/>
            <person name="Li X."/>
            <person name="Zheng H."/>
            <person name="Cong L."/>
            <person name="Lin L."/>
            <person name="Yin J."/>
            <person name="Geng J."/>
            <person name="Li G."/>
            <person name="Shi J."/>
            <person name="Liu J."/>
            <person name="Lv H."/>
            <person name="Li J."/>
            <person name="Wang J."/>
            <person name="Deng Y."/>
            <person name="Ran L."/>
            <person name="Shi X."/>
            <person name="Wang X."/>
            <person name="Wu Q."/>
            <person name="Li C."/>
            <person name="Ren X."/>
            <person name="Wang J."/>
            <person name="Wang X."/>
            <person name="Li D."/>
            <person name="Liu D."/>
            <person name="Zhang X."/>
            <person name="Ji Z."/>
            <person name="Zhao W."/>
            <person name="Sun Y."/>
            <person name="Zhang Z."/>
            <person name="Bao J."/>
            <person name="Han Y."/>
            <person name="Dong L."/>
            <person name="Ji J."/>
            <person name="Chen P."/>
            <person name="Wu S."/>
            <person name="Liu J."/>
            <person name="Xiao Y."/>
            <person name="Bu D."/>
            <person name="Tan J."/>
            <person name="Yang L."/>
            <person name="Ye C."/>
            <person name="Zhang J."/>
            <person name="Xu J."/>
            <person name="Zhou Y."/>
            <person name="Yu Y."/>
            <person name="Zhang B."/>
            <person name="Zhuang S."/>
            <person name="Wei H."/>
            <person name="Liu B."/>
            <person name="Lei M."/>
            <person name="Yu H."/>
            <person name="Li Y."/>
            <person name="Xu H."/>
            <person name="Wei S."/>
            <person name="He X."/>
            <person name="Fang L."/>
            <person name="Zhang Z."/>
            <person name="Zhang Y."/>
            <person name="Huang X."/>
            <person name="Su Z."/>
            <person name="Tong W."/>
            <person name="Li J."/>
            <person name="Tong Z."/>
            <person name="Li S."/>
            <person name="Ye J."/>
            <person name="Wang L."/>
            <person name="Fang L."/>
            <person name="Lei T."/>
            <person name="Chen C.-S."/>
            <person name="Chen H.-C."/>
            <person name="Xu Z."/>
            <person name="Li H."/>
            <person name="Huang H."/>
            <person name="Zhang F."/>
            <person name="Xu H."/>
            <person name="Li N."/>
            <person name="Zhao C."/>
            <person name="Li S."/>
            <person name="Dong L."/>
            <person name="Huang Y."/>
            <person name="Li L."/>
            <person name="Xi Y."/>
            <person name="Qi Q."/>
            <person name="Li W."/>
            <person name="Zhang B."/>
            <person name="Hu W."/>
            <person name="Zhang Y."/>
            <person name="Tian X."/>
            <person name="Jiao Y."/>
            <person name="Liang X."/>
            <person name="Jin J."/>
            <person name="Gao L."/>
            <person name="Zheng W."/>
            <person name="Hao B."/>
            <person name="Liu S.-M."/>
            <person name="Wang W."/>
            <person name="Yuan L."/>
            <person name="Cao M."/>
            <person name="McDermott J."/>
            <person name="Samudrala R."/>
            <person name="Wang J."/>
            <person name="Wong G.K.-S."/>
            <person name="Yang H."/>
        </authorList>
    </citation>
    <scope>NUCLEOTIDE SEQUENCE [LARGE SCALE GENOMIC DNA]</scope>
    <source>
        <strain>cv. Nipponbare</strain>
    </source>
</reference>
<reference key="7">
    <citation type="journal article" date="2006" name="Plant Mol. Biol.">
        <title>The Arabidopsis AtDi19 gene family encodes a novel type of Cys2/His2 zinc-finger protein implicated in ABA-independent dehydration, high-salinity stress and light signaling pathways.</title>
        <authorList>
            <person name="Rodriguez Milla M.A."/>
            <person name="Townsend J."/>
            <person name="Chang I.-F."/>
            <person name="Cushman J.C."/>
        </authorList>
    </citation>
    <scope>GENE FAMILY</scope>
    <scope>NOMENCLATURE</scope>
</reference>
<name>DI196_ORYSJ</name>